<accession>Q9WV85</accession>
<accession>Q9D931</accession>
<accession>Q9EPA2</accession>
<reference key="1">
    <citation type="submission" date="1999-05" db="EMBL/GenBank/DDBJ databases">
        <authorList>
            <person name="Mehus J.G."/>
            <person name="Lambeth D.O."/>
        </authorList>
    </citation>
    <scope>NUCLEOTIDE SEQUENCE [MRNA]</scope>
</reference>
<reference key="2">
    <citation type="journal article" date="2002" name="Gene">
        <title>Characterization of the nm23-M2, nm23-M3 and nm23-M4 mouse genes: comparison with their human orthologs.</title>
        <authorList>
            <person name="Masse K."/>
            <person name="Dabernat S."/>
            <person name="Bourbon P.-M."/>
            <person name="Larou M."/>
            <person name="Amrein L."/>
            <person name="Barraud P."/>
            <person name="Perel Y."/>
            <person name="Camara M."/>
            <person name="Landry M."/>
            <person name="Lacombe M.L."/>
            <person name="Daniel J.-Y."/>
        </authorList>
    </citation>
    <scope>NUCLEOTIDE SEQUENCE [GENOMIC DNA / MRNA]</scope>
</reference>
<reference key="3">
    <citation type="journal article" date="2005" name="Science">
        <title>The transcriptional landscape of the mammalian genome.</title>
        <authorList>
            <person name="Carninci P."/>
            <person name="Kasukawa T."/>
            <person name="Katayama S."/>
            <person name="Gough J."/>
            <person name="Frith M.C."/>
            <person name="Maeda N."/>
            <person name="Oyama R."/>
            <person name="Ravasi T."/>
            <person name="Lenhard B."/>
            <person name="Wells C."/>
            <person name="Kodzius R."/>
            <person name="Shimokawa K."/>
            <person name="Bajic V.B."/>
            <person name="Brenner S.E."/>
            <person name="Batalov S."/>
            <person name="Forrest A.R."/>
            <person name="Zavolan M."/>
            <person name="Davis M.J."/>
            <person name="Wilming L.G."/>
            <person name="Aidinis V."/>
            <person name="Allen J.E."/>
            <person name="Ambesi-Impiombato A."/>
            <person name="Apweiler R."/>
            <person name="Aturaliya R.N."/>
            <person name="Bailey T.L."/>
            <person name="Bansal M."/>
            <person name="Baxter L."/>
            <person name="Beisel K.W."/>
            <person name="Bersano T."/>
            <person name="Bono H."/>
            <person name="Chalk A.M."/>
            <person name="Chiu K.P."/>
            <person name="Choudhary V."/>
            <person name="Christoffels A."/>
            <person name="Clutterbuck D.R."/>
            <person name="Crowe M.L."/>
            <person name="Dalla E."/>
            <person name="Dalrymple B.P."/>
            <person name="de Bono B."/>
            <person name="Della Gatta G."/>
            <person name="di Bernardo D."/>
            <person name="Down T."/>
            <person name="Engstrom P."/>
            <person name="Fagiolini M."/>
            <person name="Faulkner G."/>
            <person name="Fletcher C.F."/>
            <person name="Fukushima T."/>
            <person name="Furuno M."/>
            <person name="Futaki S."/>
            <person name="Gariboldi M."/>
            <person name="Georgii-Hemming P."/>
            <person name="Gingeras T.R."/>
            <person name="Gojobori T."/>
            <person name="Green R.E."/>
            <person name="Gustincich S."/>
            <person name="Harbers M."/>
            <person name="Hayashi Y."/>
            <person name="Hensch T.K."/>
            <person name="Hirokawa N."/>
            <person name="Hill D."/>
            <person name="Huminiecki L."/>
            <person name="Iacono M."/>
            <person name="Ikeo K."/>
            <person name="Iwama A."/>
            <person name="Ishikawa T."/>
            <person name="Jakt M."/>
            <person name="Kanapin A."/>
            <person name="Katoh M."/>
            <person name="Kawasawa Y."/>
            <person name="Kelso J."/>
            <person name="Kitamura H."/>
            <person name="Kitano H."/>
            <person name="Kollias G."/>
            <person name="Krishnan S.P."/>
            <person name="Kruger A."/>
            <person name="Kummerfeld S.K."/>
            <person name="Kurochkin I.V."/>
            <person name="Lareau L.F."/>
            <person name="Lazarevic D."/>
            <person name="Lipovich L."/>
            <person name="Liu J."/>
            <person name="Liuni S."/>
            <person name="McWilliam S."/>
            <person name="Madan Babu M."/>
            <person name="Madera M."/>
            <person name="Marchionni L."/>
            <person name="Matsuda H."/>
            <person name="Matsuzawa S."/>
            <person name="Miki H."/>
            <person name="Mignone F."/>
            <person name="Miyake S."/>
            <person name="Morris K."/>
            <person name="Mottagui-Tabar S."/>
            <person name="Mulder N."/>
            <person name="Nakano N."/>
            <person name="Nakauchi H."/>
            <person name="Ng P."/>
            <person name="Nilsson R."/>
            <person name="Nishiguchi S."/>
            <person name="Nishikawa S."/>
            <person name="Nori F."/>
            <person name="Ohara O."/>
            <person name="Okazaki Y."/>
            <person name="Orlando V."/>
            <person name="Pang K.C."/>
            <person name="Pavan W.J."/>
            <person name="Pavesi G."/>
            <person name="Pesole G."/>
            <person name="Petrovsky N."/>
            <person name="Piazza S."/>
            <person name="Reed J."/>
            <person name="Reid J.F."/>
            <person name="Ring B.Z."/>
            <person name="Ringwald M."/>
            <person name="Rost B."/>
            <person name="Ruan Y."/>
            <person name="Salzberg S.L."/>
            <person name="Sandelin A."/>
            <person name="Schneider C."/>
            <person name="Schoenbach C."/>
            <person name="Sekiguchi K."/>
            <person name="Semple C.A."/>
            <person name="Seno S."/>
            <person name="Sessa L."/>
            <person name="Sheng Y."/>
            <person name="Shibata Y."/>
            <person name="Shimada H."/>
            <person name="Shimada K."/>
            <person name="Silva D."/>
            <person name="Sinclair B."/>
            <person name="Sperling S."/>
            <person name="Stupka E."/>
            <person name="Sugiura K."/>
            <person name="Sultana R."/>
            <person name="Takenaka Y."/>
            <person name="Taki K."/>
            <person name="Tammoja K."/>
            <person name="Tan S.L."/>
            <person name="Tang S."/>
            <person name="Taylor M.S."/>
            <person name="Tegner J."/>
            <person name="Teichmann S.A."/>
            <person name="Ueda H.R."/>
            <person name="van Nimwegen E."/>
            <person name="Verardo R."/>
            <person name="Wei C.L."/>
            <person name="Yagi K."/>
            <person name="Yamanishi H."/>
            <person name="Zabarovsky E."/>
            <person name="Zhu S."/>
            <person name="Zimmer A."/>
            <person name="Hide W."/>
            <person name="Bult C."/>
            <person name="Grimmond S.M."/>
            <person name="Teasdale R.D."/>
            <person name="Liu E.T."/>
            <person name="Brusic V."/>
            <person name="Quackenbush J."/>
            <person name="Wahlestedt C."/>
            <person name="Mattick J.S."/>
            <person name="Hume D.A."/>
            <person name="Kai C."/>
            <person name="Sasaki D."/>
            <person name="Tomaru Y."/>
            <person name="Fukuda S."/>
            <person name="Kanamori-Katayama M."/>
            <person name="Suzuki M."/>
            <person name="Aoki J."/>
            <person name="Arakawa T."/>
            <person name="Iida J."/>
            <person name="Imamura K."/>
            <person name="Itoh M."/>
            <person name="Kato T."/>
            <person name="Kawaji H."/>
            <person name="Kawagashira N."/>
            <person name="Kawashima T."/>
            <person name="Kojima M."/>
            <person name="Kondo S."/>
            <person name="Konno H."/>
            <person name="Nakano K."/>
            <person name="Ninomiya N."/>
            <person name="Nishio T."/>
            <person name="Okada M."/>
            <person name="Plessy C."/>
            <person name="Shibata K."/>
            <person name="Shiraki T."/>
            <person name="Suzuki S."/>
            <person name="Tagami M."/>
            <person name="Waki K."/>
            <person name="Watahiki A."/>
            <person name="Okamura-Oho Y."/>
            <person name="Suzuki H."/>
            <person name="Kawai J."/>
            <person name="Hayashizaki Y."/>
        </authorList>
    </citation>
    <scope>NUCLEOTIDE SEQUENCE [LARGE SCALE MRNA]</scope>
    <source>
        <strain>C57BL/6J</strain>
        <tissue>Pancreas</tissue>
    </source>
</reference>
<reference key="4">
    <citation type="journal article" date="2004" name="Genome Res.">
        <title>The status, quality, and expansion of the NIH full-length cDNA project: the Mammalian Gene Collection (MGC).</title>
        <authorList>
            <consortium name="The MGC Project Team"/>
        </authorList>
    </citation>
    <scope>NUCLEOTIDE SEQUENCE [LARGE SCALE MRNA]</scope>
    <source>
        <strain>C57BL/6J</strain>
        <tissue>Thymus</tissue>
    </source>
</reference>
<reference key="5">
    <citation type="journal article" date="2010" name="Cell">
        <title>A tissue-specific atlas of mouse protein phosphorylation and expression.</title>
        <authorList>
            <person name="Huttlin E.L."/>
            <person name="Jedrychowski M.P."/>
            <person name="Elias J.E."/>
            <person name="Goswami T."/>
            <person name="Rad R."/>
            <person name="Beausoleil S.A."/>
            <person name="Villen J."/>
            <person name="Haas W."/>
            <person name="Sowa M.E."/>
            <person name="Gygi S.P."/>
        </authorList>
    </citation>
    <scope>IDENTIFICATION BY MASS SPECTROMETRY [LARGE SCALE ANALYSIS]</scope>
    <source>
        <tissue>Brain</tissue>
        <tissue>Brown adipose tissue</tissue>
        <tissue>Heart</tissue>
        <tissue>Kidney</tissue>
        <tissue>Liver</tissue>
        <tissue>Lung</tissue>
        <tissue>Pancreas</tissue>
        <tissue>Spleen</tissue>
        <tissue>Testis</tissue>
    </source>
</reference>
<reference key="6">
    <citation type="journal article" date="2012" name="PLoS Genet.">
        <title>The nucleoside diphosphate kinase gene Nme3 acts as quantitative trait locus promoting non-Mendelian inheritance.</title>
        <authorList>
            <person name="Bauer H."/>
            <person name="Schindler S."/>
            <person name="Charron Y."/>
            <person name="Willert J."/>
            <person name="Kusecek B."/>
            <person name="Herrmann B.G."/>
        </authorList>
    </citation>
    <scope>FUNCTION</scope>
    <scope>CATALYTIC ACTIVITY</scope>
    <scope>MUTAGENESIS OF PRO-89</scope>
</reference>
<reference key="7">
    <citation type="journal article" date="2018" name="J. Biol. Chem.">
        <title>The nucleoside-diphosphate kinase NME3 associates with nephronophthisis proteins and is required for ciliary function during renal development.</title>
        <authorList>
            <person name="Hoff S."/>
            <person name="Epting D."/>
            <person name="Falk N."/>
            <person name="Schroda S."/>
            <person name="Braun D.A."/>
            <person name="Halbritter J."/>
            <person name="Hildebrandt F."/>
            <person name="Kramer-Zucker A."/>
            <person name="Bergmann C."/>
            <person name="Walz G."/>
            <person name="Lienkamp S.S."/>
        </authorList>
    </citation>
    <scope>SUBCELLULAR LOCATION</scope>
</reference>
<protein>
    <recommendedName>
        <fullName>Nucleoside diphosphate kinase 3</fullName>
        <shortName>NDK 3</shortName>
        <shortName>NDP kinase 3</shortName>
        <ecNumber evidence="4">2.7.4.6</ecNumber>
    </recommendedName>
    <alternativeName>
        <fullName>DR-nm23</fullName>
    </alternativeName>
    <alternativeName>
        <fullName>Nucleoside diphosphate kinase C</fullName>
        <shortName>NDPKC</shortName>
    </alternativeName>
    <alternativeName>
        <fullName evidence="6">nm23-M3</fullName>
    </alternativeName>
</protein>
<dbReference type="EC" id="2.7.4.6" evidence="4"/>
<dbReference type="EMBL" id="AF153449">
    <property type="protein sequence ID" value="AAD38976.1"/>
    <property type="molecule type" value="mRNA"/>
</dbReference>
<dbReference type="EMBL" id="AF288689">
    <property type="protein sequence ID" value="AAG02199.1"/>
    <property type="molecule type" value="mRNA"/>
</dbReference>
<dbReference type="EMBL" id="AF288691">
    <property type="protein sequence ID" value="AAG02201.1"/>
    <property type="molecule type" value="Genomic_DNA"/>
</dbReference>
<dbReference type="EMBL" id="AK007399">
    <property type="protein sequence ID" value="BAB25013.1"/>
    <property type="molecule type" value="mRNA"/>
</dbReference>
<dbReference type="EMBL" id="BC028503">
    <property type="protein sequence ID" value="AAH28503.1"/>
    <property type="molecule type" value="mRNA"/>
</dbReference>
<dbReference type="CCDS" id="CCDS28503.1"/>
<dbReference type="RefSeq" id="NP_062704.2">
    <property type="nucleotide sequence ID" value="NM_019730.2"/>
</dbReference>
<dbReference type="SMR" id="Q9WV85"/>
<dbReference type="BioGRID" id="219731">
    <property type="interactions" value="7"/>
</dbReference>
<dbReference type="FunCoup" id="Q9WV85">
    <property type="interactions" value="926"/>
</dbReference>
<dbReference type="STRING" id="10090.ENSMUSP00000024978"/>
<dbReference type="iPTMnet" id="Q9WV85"/>
<dbReference type="PhosphoSitePlus" id="Q9WV85"/>
<dbReference type="SwissPalm" id="Q9WV85"/>
<dbReference type="jPOST" id="Q9WV85"/>
<dbReference type="PaxDb" id="10090-ENSMUSP00000024978"/>
<dbReference type="PeptideAtlas" id="Q9WV85"/>
<dbReference type="ProteomicsDB" id="293535"/>
<dbReference type="Pumba" id="Q9WV85"/>
<dbReference type="Antibodypedia" id="23225">
    <property type="antibodies" value="208 antibodies from 25 providers"/>
</dbReference>
<dbReference type="DNASU" id="79059"/>
<dbReference type="Ensembl" id="ENSMUST00000024978.7">
    <property type="protein sequence ID" value="ENSMUSP00000024978.7"/>
    <property type="gene ID" value="ENSMUSG00000073435.11"/>
</dbReference>
<dbReference type="GeneID" id="79059"/>
<dbReference type="KEGG" id="mmu:79059"/>
<dbReference type="UCSC" id="uc008ayz.2">
    <property type="organism name" value="mouse"/>
</dbReference>
<dbReference type="AGR" id="MGI:1930182"/>
<dbReference type="CTD" id="4832"/>
<dbReference type="MGI" id="MGI:1930182">
    <property type="gene designation" value="Nme3"/>
</dbReference>
<dbReference type="VEuPathDB" id="HostDB:ENSMUSG00000073435"/>
<dbReference type="eggNOG" id="KOG0888">
    <property type="taxonomic scope" value="Eukaryota"/>
</dbReference>
<dbReference type="GeneTree" id="ENSGT00940000161283"/>
<dbReference type="HOGENOM" id="CLU_060216_6_2_1"/>
<dbReference type="InParanoid" id="Q9WV85"/>
<dbReference type="OMA" id="ACAGVHE"/>
<dbReference type="OrthoDB" id="2162449at2759"/>
<dbReference type="PhylomeDB" id="Q9WV85"/>
<dbReference type="TreeFam" id="TF106373"/>
<dbReference type="Reactome" id="R-MMU-499943">
    <property type="pathway name" value="Interconversion of nucleotide di- and triphosphates"/>
</dbReference>
<dbReference type="BioGRID-ORCS" id="79059">
    <property type="hits" value="3 hits in 80 CRISPR screens"/>
</dbReference>
<dbReference type="ChiTaRS" id="Nme3">
    <property type="organism name" value="mouse"/>
</dbReference>
<dbReference type="PRO" id="PR:Q9WV85"/>
<dbReference type="Proteomes" id="UP000000589">
    <property type="component" value="Chromosome 17"/>
</dbReference>
<dbReference type="RNAct" id="Q9WV85">
    <property type="molecule type" value="protein"/>
</dbReference>
<dbReference type="Bgee" id="ENSMUSG00000073435">
    <property type="expression patterns" value="Expressed in bone marrow and 81 other cell types or tissues"/>
</dbReference>
<dbReference type="GO" id="GO:0036064">
    <property type="term" value="C:ciliary basal body"/>
    <property type="evidence" value="ECO:0000314"/>
    <property type="project" value="UniProtKB"/>
</dbReference>
<dbReference type="GO" id="GO:0005741">
    <property type="term" value="C:mitochondrial outer membrane"/>
    <property type="evidence" value="ECO:0007669"/>
    <property type="project" value="UniProtKB-SubCell"/>
</dbReference>
<dbReference type="GO" id="GO:0005739">
    <property type="term" value="C:mitochondrion"/>
    <property type="evidence" value="ECO:0007005"/>
    <property type="project" value="MGI"/>
</dbReference>
<dbReference type="GO" id="GO:0005524">
    <property type="term" value="F:ATP binding"/>
    <property type="evidence" value="ECO:0007669"/>
    <property type="project" value="UniProtKB-KW"/>
</dbReference>
<dbReference type="GO" id="GO:0046872">
    <property type="term" value="F:metal ion binding"/>
    <property type="evidence" value="ECO:0007669"/>
    <property type="project" value="UniProtKB-KW"/>
</dbReference>
<dbReference type="GO" id="GO:0004550">
    <property type="term" value="F:nucleoside diphosphate kinase activity"/>
    <property type="evidence" value="ECO:0000314"/>
    <property type="project" value="MGI"/>
</dbReference>
<dbReference type="GO" id="GO:0006241">
    <property type="term" value="P:CTP biosynthetic process"/>
    <property type="evidence" value="ECO:0007669"/>
    <property type="project" value="InterPro"/>
</dbReference>
<dbReference type="GO" id="GO:0006281">
    <property type="term" value="P:DNA repair"/>
    <property type="evidence" value="ECO:0000250"/>
    <property type="project" value="UniProtKB"/>
</dbReference>
<dbReference type="GO" id="GO:0006231">
    <property type="term" value="P:dTMP biosynthetic process"/>
    <property type="evidence" value="ECO:0000303"/>
    <property type="project" value="MGI"/>
</dbReference>
<dbReference type="GO" id="GO:0006183">
    <property type="term" value="P:GTP biosynthetic process"/>
    <property type="evidence" value="ECO:0007669"/>
    <property type="project" value="InterPro"/>
</dbReference>
<dbReference type="GO" id="GO:0008053">
    <property type="term" value="P:mitochondrial fusion"/>
    <property type="evidence" value="ECO:0000250"/>
    <property type="project" value="UniProtKB"/>
</dbReference>
<dbReference type="GO" id="GO:0009142">
    <property type="term" value="P:nucleoside triphosphate biosynthetic process"/>
    <property type="evidence" value="ECO:0000250"/>
    <property type="project" value="UniProtKB"/>
</dbReference>
<dbReference type="GO" id="GO:0006228">
    <property type="term" value="P:UTP biosynthetic process"/>
    <property type="evidence" value="ECO:0007669"/>
    <property type="project" value="InterPro"/>
</dbReference>
<dbReference type="CDD" id="cd04413">
    <property type="entry name" value="NDPk_I"/>
    <property type="match status" value="1"/>
</dbReference>
<dbReference type="FunFam" id="3.30.70.141:FF:000002">
    <property type="entry name" value="Nucleoside diphosphate kinase"/>
    <property type="match status" value="1"/>
</dbReference>
<dbReference type="Gene3D" id="3.30.70.141">
    <property type="entry name" value="Nucleoside diphosphate kinase-like domain"/>
    <property type="match status" value="1"/>
</dbReference>
<dbReference type="HAMAP" id="MF_00451">
    <property type="entry name" value="NDP_kinase"/>
    <property type="match status" value="1"/>
</dbReference>
<dbReference type="InterPro" id="IPR034907">
    <property type="entry name" value="NDK-like_dom"/>
</dbReference>
<dbReference type="InterPro" id="IPR036850">
    <property type="entry name" value="NDK-like_dom_sf"/>
</dbReference>
<dbReference type="InterPro" id="IPR001564">
    <property type="entry name" value="Nucleoside_diP_kinase"/>
</dbReference>
<dbReference type="InterPro" id="IPR023005">
    <property type="entry name" value="Nucleoside_diP_kinase_AS"/>
</dbReference>
<dbReference type="NCBIfam" id="NF001908">
    <property type="entry name" value="PRK00668.1"/>
    <property type="match status" value="1"/>
</dbReference>
<dbReference type="PANTHER" id="PTHR11349">
    <property type="entry name" value="NUCLEOSIDE DIPHOSPHATE KINASE"/>
    <property type="match status" value="1"/>
</dbReference>
<dbReference type="Pfam" id="PF00334">
    <property type="entry name" value="NDK"/>
    <property type="match status" value="1"/>
</dbReference>
<dbReference type="PRINTS" id="PR01243">
    <property type="entry name" value="NUCDPKINASE"/>
</dbReference>
<dbReference type="SMART" id="SM00562">
    <property type="entry name" value="NDK"/>
    <property type="match status" value="1"/>
</dbReference>
<dbReference type="SUPFAM" id="SSF54919">
    <property type="entry name" value="Nucleoside diphosphate kinase, NDK"/>
    <property type="match status" value="1"/>
</dbReference>
<dbReference type="PROSITE" id="PS00469">
    <property type="entry name" value="NDPK"/>
    <property type="match status" value="1"/>
</dbReference>
<dbReference type="PROSITE" id="PS51374">
    <property type="entry name" value="NDPK_LIKE"/>
    <property type="match status" value="1"/>
</dbReference>
<organism>
    <name type="scientific">Mus musculus</name>
    <name type="common">Mouse</name>
    <dbReference type="NCBI Taxonomy" id="10090"/>
    <lineage>
        <taxon>Eukaryota</taxon>
        <taxon>Metazoa</taxon>
        <taxon>Chordata</taxon>
        <taxon>Craniata</taxon>
        <taxon>Vertebrata</taxon>
        <taxon>Euteleostomi</taxon>
        <taxon>Mammalia</taxon>
        <taxon>Eutheria</taxon>
        <taxon>Euarchontoglires</taxon>
        <taxon>Glires</taxon>
        <taxon>Rodentia</taxon>
        <taxon>Myomorpha</taxon>
        <taxon>Muroidea</taxon>
        <taxon>Muridae</taxon>
        <taxon>Murinae</taxon>
        <taxon>Mus</taxon>
        <taxon>Mus</taxon>
    </lineage>
</organism>
<proteinExistence type="evidence at protein level"/>
<keyword id="KW-0067">ATP-binding</keyword>
<keyword id="KW-0966">Cell projection</keyword>
<keyword id="KW-0963">Cytoplasm</keyword>
<keyword id="KW-0206">Cytoskeleton</keyword>
<keyword id="KW-0418">Kinase</keyword>
<keyword id="KW-0460">Magnesium</keyword>
<keyword id="KW-0472">Membrane</keyword>
<keyword id="KW-0479">Metal-binding</keyword>
<keyword id="KW-0496">Mitochondrion</keyword>
<keyword id="KW-1000">Mitochondrion outer membrane</keyword>
<keyword id="KW-0546">Nucleotide metabolism</keyword>
<keyword id="KW-0547">Nucleotide-binding</keyword>
<keyword id="KW-1185">Reference proteome</keyword>
<keyword id="KW-0808">Transferase</keyword>
<sequence length="169" mass="19099">MICLVLTIFANLFPSAYSGVNERTFLAVKPDGVQRRLVGEIVRRFERKGFKLVALKLVQASEELLREHYVELREKPFYSRLVKYMSSGPVVAMVWQGLDVVHASRALIGATDPGDAMPGTIRGDFCMEVGKNVIHGSDSVESAHREIALWFREAELLCWEDSAGHWLYE</sequence>
<gene>
    <name type="primary">Nme3</name>
</gene>
<evidence type="ECO:0000250" key="1">
    <source>
        <dbReference type="UniProtKB" id="P22392"/>
    </source>
</evidence>
<evidence type="ECO:0000250" key="2">
    <source>
        <dbReference type="UniProtKB" id="Q13232"/>
    </source>
</evidence>
<evidence type="ECO:0000250" key="3">
    <source>
        <dbReference type="UniProtKB" id="Q9PTF3"/>
    </source>
</evidence>
<evidence type="ECO:0000269" key="4">
    <source>
    </source>
</evidence>
<evidence type="ECO:0000269" key="5">
    <source>
    </source>
</evidence>
<evidence type="ECO:0000303" key="6">
    <source>
    </source>
</evidence>
<evidence type="ECO:0000305" key="7"/>
<evidence type="ECO:0000305" key="8">
    <source>
    </source>
</evidence>
<feature type="chain" id="PRO_0000137124" description="Nucleoside diphosphate kinase 3">
    <location>
        <begin position="1"/>
        <end position="169"/>
    </location>
</feature>
<feature type="active site" description="Pros-phosphohistidine intermediate" evidence="1">
    <location>
        <position position="135"/>
    </location>
</feature>
<feature type="binding site" evidence="2">
    <location>
        <position position="29"/>
    </location>
    <ligand>
        <name>ADP</name>
        <dbReference type="ChEBI" id="CHEBI:456216"/>
    </ligand>
</feature>
<feature type="binding site" evidence="2">
    <location>
        <position position="105"/>
    </location>
    <ligand>
        <name>ADP</name>
        <dbReference type="ChEBI" id="CHEBI:456216"/>
    </ligand>
</feature>
<feature type="binding site" evidence="2">
    <location>
        <position position="111"/>
    </location>
    <ligand>
        <name>ADP</name>
        <dbReference type="ChEBI" id="CHEBI:456216"/>
    </ligand>
</feature>
<feature type="binding site" evidence="2">
    <location>
        <position position="122"/>
    </location>
    <ligand>
        <name>ADP</name>
        <dbReference type="ChEBI" id="CHEBI:456216"/>
    </ligand>
</feature>
<feature type="binding site" evidence="2">
    <location>
        <position position="129"/>
    </location>
    <ligand>
        <name>ADP</name>
        <dbReference type="ChEBI" id="CHEBI:456216"/>
    </ligand>
</feature>
<feature type="binding site" evidence="2">
    <location>
        <position position="132"/>
    </location>
    <ligand>
        <name>ADP</name>
        <dbReference type="ChEBI" id="CHEBI:456216"/>
    </ligand>
</feature>
<feature type="mutagenesis site" description="Strongly reduced nucleoside diphosphate kinase activity." evidence="4">
    <original>P</original>
    <variation>S</variation>
    <location>
        <position position="89"/>
    </location>
</feature>
<feature type="sequence conflict" description="In Ref. 1; AAD38976." evidence="7" ref="1">
    <original>G</original>
    <variation>W</variation>
    <location>
        <position position="97"/>
    </location>
</feature>
<feature type="sequence conflict" description="In Ref. 2; AAG02199/AAG02201." evidence="7" ref="2">
    <original>M</original>
    <variation>V</variation>
    <location>
        <position position="127"/>
    </location>
</feature>
<name>NDK3_MOUSE</name>
<comment type="function">
    <text evidence="2 3 4">Catalyzes the phosphorylation of ribonucleosides and deoxyribonucleoside diphosphates, other than ATP, into the corresponding triphosphates with ATP as the major phosphate donor. The ATP gamma phosphate is transferred to the nucleoside diphosphate beta phosphate via a ping-pong mechanism, using a phosphorylated active-site intermediate. Through the catalyzed exchange of gamma-phosphate between di- and triphosphonucleosides participates in regulation of intracellular nucleotide homeostasis (PubMed:22438820). Inhibits granulocyte differentiation (By similarity). May be required for ciliary function during renal development (By similarity).</text>
</comment>
<comment type="function">
    <text evidence="2">Independently of its kinase activity, facilitates mitochondrial tethering prior to membrane fusion through its direct membrane-binding and hexamerization. Implicated in repair of both single- and double-stranded breaks in DNA through its association with the ribonucleotide reductase complex (RNR complex) via its interaction with the histone acetyltransferase KAT5, this interaction enables recruitment of NME3 at DNA damage sites where it plays a role in the repair of DNA, independently of its kinase activity.</text>
</comment>
<comment type="catalytic activity">
    <reaction evidence="4">
        <text>a 2'-deoxyribonucleoside 5'-diphosphate + ATP = a 2'-deoxyribonucleoside 5'-triphosphate + ADP</text>
        <dbReference type="Rhea" id="RHEA:44640"/>
        <dbReference type="ChEBI" id="CHEBI:30616"/>
        <dbReference type="ChEBI" id="CHEBI:61560"/>
        <dbReference type="ChEBI" id="CHEBI:73316"/>
        <dbReference type="ChEBI" id="CHEBI:456216"/>
        <dbReference type="EC" id="2.7.4.6"/>
    </reaction>
    <physiologicalReaction direction="left-to-right" evidence="8">
        <dbReference type="Rhea" id="RHEA:44641"/>
    </physiologicalReaction>
</comment>
<comment type="catalytic activity">
    <reaction evidence="4">
        <text>a ribonucleoside 5'-diphosphate + ATP = a ribonucleoside 5'-triphosphate + ADP</text>
        <dbReference type="Rhea" id="RHEA:18113"/>
        <dbReference type="ChEBI" id="CHEBI:30616"/>
        <dbReference type="ChEBI" id="CHEBI:57930"/>
        <dbReference type="ChEBI" id="CHEBI:61557"/>
        <dbReference type="ChEBI" id="CHEBI:456216"/>
        <dbReference type="EC" id="2.7.4.6"/>
    </reaction>
    <physiologicalReaction direction="left-to-right" evidence="8">
        <dbReference type="Rhea" id="RHEA:18114"/>
    </physiologicalReaction>
</comment>
<comment type="cofactor">
    <cofactor evidence="1">
        <name>Mg(2+)</name>
        <dbReference type="ChEBI" id="CHEBI:18420"/>
    </cofactor>
</comment>
<comment type="subunit">
    <text evidence="2">Homohexamer. Interacts (via its N-terminal region) with KAT5; this interaction enables recruitment of NME3 at DNA damage sites where it plays a role in the repair of DNA. Found in association with several ciliary nephronophthisis proteins, including NEK8, CEP164, ANKS6.</text>
</comment>
<comment type="subcellular location">
    <subcellularLocation>
        <location evidence="2">Mitochondrion outer membrane</location>
        <topology evidence="2">Peripheral membrane protein</topology>
    </subcellularLocation>
    <subcellularLocation>
        <location evidence="2">Cytoplasm</location>
    </subcellularLocation>
    <subcellularLocation>
        <location evidence="5">Cytoplasm</location>
        <location evidence="5">Cytoskeleton</location>
        <location evidence="5">Cilium basal body</location>
    </subcellularLocation>
</comment>
<comment type="domain">
    <text evidence="2">The N-terminal hydrophobic region (1-17) is critical for mitochondrial outer membrane targeting and phosphatidic acid binding.</text>
</comment>
<comment type="similarity">
    <text evidence="7">Belongs to the NDK family.</text>
</comment>